<dbReference type="EC" id="7.1.1.-"/>
<dbReference type="EMBL" id="DQ424856">
    <property type="protein sequence ID" value="ABE47588.1"/>
    <property type="molecule type" value="Genomic_DNA"/>
</dbReference>
<dbReference type="RefSeq" id="YP_567131.1">
    <property type="nucleotide sequence ID" value="NC_007957.1"/>
</dbReference>
<dbReference type="SMR" id="Q0ZIW5"/>
<dbReference type="FunCoup" id="Q0ZIW5">
    <property type="interactions" value="15"/>
</dbReference>
<dbReference type="STRING" id="29760.Q0ZIW5"/>
<dbReference type="GeneID" id="4025042"/>
<dbReference type="KEGG" id="vvi:4025042"/>
<dbReference type="InParanoid" id="Q0ZIW5"/>
<dbReference type="OrthoDB" id="888318at71240"/>
<dbReference type="Proteomes" id="UP000009183">
    <property type="component" value="Chloroplast"/>
</dbReference>
<dbReference type="GO" id="GO:0009535">
    <property type="term" value="C:chloroplast thylakoid membrane"/>
    <property type="evidence" value="ECO:0007669"/>
    <property type="project" value="UniProtKB-SubCell"/>
</dbReference>
<dbReference type="GO" id="GO:0008137">
    <property type="term" value="F:NADH dehydrogenase (ubiquinone) activity"/>
    <property type="evidence" value="ECO:0007669"/>
    <property type="project" value="InterPro"/>
</dbReference>
<dbReference type="GO" id="GO:0048038">
    <property type="term" value="F:quinone binding"/>
    <property type="evidence" value="ECO:0007669"/>
    <property type="project" value="UniProtKB-KW"/>
</dbReference>
<dbReference type="FunFam" id="1.20.120.1200:FF:000002">
    <property type="entry name" value="NAD(P)H-quinone oxidoreductase subunit 6, chloroplastic"/>
    <property type="match status" value="1"/>
</dbReference>
<dbReference type="Gene3D" id="1.20.120.1200">
    <property type="entry name" value="NADH-ubiquinone/plastoquinone oxidoreductase chain 6, subunit NuoJ"/>
    <property type="match status" value="1"/>
</dbReference>
<dbReference type="InterPro" id="IPR050290">
    <property type="entry name" value="NAD(P)H-Q_Oxidoreduct_6"/>
</dbReference>
<dbReference type="InterPro" id="IPR001457">
    <property type="entry name" value="NADH_UbQ/plastoQ_OxRdtase_su6"/>
</dbReference>
<dbReference type="InterPro" id="IPR042106">
    <property type="entry name" value="Nuo/plastoQ_OxRdtase_6_NuoJ"/>
</dbReference>
<dbReference type="PANTHER" id="PTHR48479">
    <property type="entry name" value="NAD(P)H-QUINONE OXIDOREDUCTASE SUBUNIT 6, CHLOROPLASTIC"/>
    <property type="match status" value="1"/>
</dbReference>
<dbReference type="PANTHER" id="PTHR48479:SF1">
    <property type="entry name" value="NAD(P)H-QUINONE OXIDOREDUCTASE SUBUNIT 6, CHLOROPLASTIC"/>
    <property type="match status" value="1"/>
</dbReference>
<dbReference type="Pfam" id="PF00499">
    <property type="entry name" value="Oxidored_q3"/>
    <property type="match status" value="1"/>
</dbReference>
<protein>
    <recommendedName>
        <fullName>NAD(P)H-quinone oxidoreductase subunit 6, chloroplastic</fullName>
        <ecNumber>7.1.1.-</ecNumber>
    </recommendedName>
    <alternativeName>
        <fullName>NAD(P)H dehydrogenase subunit 6</fullName>
    </alternativeName>
    <alternativeName>
        <fullName>NADH-plastoquinone oxidoreductase subunit 6</fullName>
    </alternativeName>
</protein>
<organism>
    <name type="scientific">Vitis vinifera</name>
    <name type="common">Grape</name>
    <dbReference type="NCBI Taxonomy" id="29760"/>
    <lineage>
        <taxon>Eukaryota</taxon>
        <taxon>Viridiplantae</taxon>
        <taxon>Streptophyta</taxon>
        <taxon>Embryophyta</taxon>
        <taxon>Tracheophyta</taxon>
        <taxon>Spermatophyta</taxon>
        <taxon>Magnoliopsida</taxon>
        <taxon>eudicotyledons</taxon>
        <taxon>Gunneridae</taxon>
        <taxon>Pentapetalae</taxon>
        <taxon>rosids</taxon>
        <taxon>Vitales</taxon>
        <taxon>Vitaceae</taxon>
        <taxon>Viteae</taxon>
        <taxon>Vitis</taxon>
    </lineage>
</organism>
<reference key="1">
    <citation type="journal article" date="2006" name="BMC Evol. Biol.">
        <title>Phylogenetic analyses of Vitis (Vitaceae) based on complete chloroplast genome sequences: effects of taxon sampling and phylogenetic methods on resolving relationships among rosids.</title>
        <authorList>
            <person name="Jansen R.K."/>
            <person name="Kaittanis C."/>
            <person name="Lee S.-B."/>
            <person name="Saski C."/>
            <person name="Tomkins J."/>
            <person name="Alverson A.J."/>
            <person name="Daniell H."/>
        </authorList>
    </citation>
    <scope>NUCLEOTIDE SEQUENCE [LARGE SCALE GENOMIC DNA]</scope>
    <source>
        <strain>cv. Maxxa</strain>
    </source>
</reference>
<evidence type="ECO:0000250" key="1"/>
<evidence type="ECO:0000255" key="2"/>
<evidence type="ECO:0000305" key="3"/>
<proteinExistence type="inferred from homology"/>
<sequence>MDLPGPIHDFLLVFLGSGLILGGLGVVLLTNPIYSAFSLGLVFVCISLFYIPSNSHFVAAAQLLIYVGAINVLIIFAVMFMNGSEYYKDFNLWTVGDGVTSVVCTSIFASLITTILDTSWYGIIWTTRSNQIIEQDLISNSQQIGIHLSTDFFLPFELISIILLVALIGAIAVARQ</sequence>
<feature type="chain" id="PRO_0000360295" description="NAD(P)H-quinone oxidoreductase subunit 6, chloroplastic">
    <location>
        <begin position="1"/>
        <end position="176"/>
    </location>
</feature>
<feature type="transmembrane region" description="Helical" evidence="2">
    <location>
        <begin position="10"/>
        <end position="30"/>
    </location>
</feature>
<feature type="transmembrane region" description="Helical" evidence="2">
    <location>
        <begin position="32"/>
        <end position="52"/>
    </location>
</feature>
<feature type="transmembrane region" description="Helical" evidence="2">
    <location>
        <begin position="61"/>
        <end position="81"/>
    </location>
</feature>
<feature type="transmembrane region" description="Helical" evidence="2">
    <location>
        <begin position="93"/>
        <end position="115"/>
    </location>
</feature>
<feature type="transmembrane region" description="Helical" evidence="2">
    <location>
        <begin position="152"/>
        <end position="172"/>
    </location>
</feature>
<gene>
    <name type="primary">ndhG</name>
</gene>
<comment type="function">
    <text evidence="1">NDH shuttles electrons from NAD(P)H:plastoquinone, via FMN and iron-sulfur (Fe-S) centers, to quinones in the photosynthetic chain and possibly in a chloroplast respiratory chain. The immediate electron acceptor for the enzyme in this species is believed to be plastoquinone. Couples the redox reaction to proton translocation, and thus conserves the redox energy in a proton gradient (By similarity).</text>
</comment>
<comment type="catalytic activity">
    <reaction>
        <text>a plastoquinone + NADH + (n+1) H(+)(in) = a plastoquinol + NAD(+) + n H(+)(out)</text>
        <dbReference type="Rhea" id="RHEA:42608"/>
        <dbReference type="Rhea" id="RHEA-COMP:9561"/>
        <dbReference type="Rhea" id="RHEA-COMP:9562"/>
        <dbReference type="ChEBI" id="CHEBI:15378"/>
        <dbReference type="ChEBI" id="CHEBI:17757"/>
        <dbReference type="ChEBI" id="CHEBI:57540"/>
        <dbReference type="ChEBI" id="CHEBI:57945"/>
        <dbReference type="ChEBI" id="CHEBI:62192"/>
    </reaction>
</comment>
<comment type="catalytic activity">
    <reaction>
        <text>a plastoquinone + NADPH + (n+1) H(+)(in) = a plastoquinol + NADP(+) + n H(+)(out)</text>
        <dbReference type="Rhea" id="RHEA:42612"/>
        <dbReference type="Rhea" id="RHEA-COMP:9561"/>
        <dbReference type="Rhea" id="RHEA-COMP:9562"/>
        <dbReference type="ChEBI" id="CHEBI:15378"/>
        <dbReference type="ChEBI" id="CHEBI:17757"/>
        <dbReference type="ChEBI" id="CHEBI:57783"/>
        <dbReference type="ChEBI" id="CHEBI:58349"/>
        <dbReference type="ChEBI" id="CHEBI:62192"/>
    </reaction>
</comment>
<comment type="subunit">
    <text evidence="1">NDH is composed of at least 16 different subunits, 5 of which are encoded in the nucleus.</text>
</comment>
<comment type="subcellular location">
    <subcellularLocation>
        <location evidence="1">Plastid</location>
        <location evidence="1">Chloroplast thylakoid membrane</location>
        <topology evidence="1">Multi-pass membrane protein</topology>
    </subcellularLocation>
</comment>
<comment type="similarity">
    <text evidence="3">Belongs to the complex I subunit 6 family.</text>
</comment>
<name>NU6C_VITVI</name>
<geneLocation type="chloroplast"/>
<keyword id="KW-0150">Chloroplast</keyword>
<keyword id="KW-0472">Membrane</keyword>
<keyword id="KW-0520">NAD</keyword>
<keyword id="KW-0521">NADP</keyword>
<keyword id="KW-0934">Plastid</keyword>
<keyword id="KW-0618">Plastoquinone</keyword>
<keyword id="KW-0874">Quinone</keyword>
<keyword id="KW-1185">Reference proteome</keyword>
<keyword id="KW-0793">Thylakoid</keyword>
<keyword id="KW-1278">Translocase</keyword>
<keyword id="KW-0812">Transmembrane</keyword>
<keyword id="KW-1133">Transmembrane helix</keyword>
<keyword id="KW-0813">Transport</keyword>
<accession>Q0ZIW5</accession>